<sequence>MVQSCSAYGCKNRYDKDKPVSFHKFPLTRPSLCKQWEAAVKRKNFKPTKYSSICSEHFTPDCFKRECNNKLLKENAVPTIFLYIEPHEKKEDLESQEQLPSPSPPASQVDAAIGLLMPPLQTPDNLSVFCDHNYTVEDTMHQRKRILQLEQQVEKLRKKLKTAQQRCRRQERQLEKLKEVVHFQREKDDASERGYVILPNDYFEIVEVPA</sequence>
<accession>Q8CHW1</accession>
<keyword id="KW-0131">Cell cycle</keyword>
<keyword id="KW-0175">Coiled coil</keyword>
<keyword id="KW-0238">DNA-binding</keyword>
<keyword id="KW-0479">Metal-binding</keyword>
<keyword id="KW-0539">Nucleus</keyword>
<keyword id="KW-1185">Reference proteome</keyword>
<keyword id="KW-0804">Transcription</keyword>
<keyword id="KW-0805">Transcription regulation</keyword>
<keyword id="KW-0862">Zinc</keyword>
<keyword id="KW-0863">Zinc-finger</keyword>
<reference key="1">
    <citation type="journal article" date="2004" name="Genome Res.">
        <title>The status, quality, and expansion of the NIH full-length cDNA project: the Mammalian Gene Collection (MGC).</title>
        <authorList>
            <consortium name="The MGC Project Team"/>
        </authorList>
    </citation>
    <scope>NUCLEOTIDE SEQUENCE [LARGE SCALE MRNA]</scope>
    <source>
        <strain>Czech II</strain>
        <tissue>Lung</tissue>
    </source>
</reference>
<reference key="2">
    <citation type="journal article" date="2010" name="J. Biol. Chem.">
        <title>The THAP-zinc finger protein THAP1 associates with coactivator HCF-1 and O-GlcNAc transferase: a link between DYT6 and DYT3 dystonias.</title>
        <authorList>
            <person name="Mazars R."/>
            <person name="Gonzalez-de-Peredo A."/>
            <person name="Cayrol C."/>
            <person name="Lavigne A.C."/>
            <person name="Vogel J.L."/>
            <person name="Ortega N."/>
            <person name="Lacroix C."/>
            <person name="Gautier V."/>
            <person name="Huet G."/>
            <person name="Ray A."/>
            <person name="Monsarrat B."/>
            <person name="Kristie T.M."/>
            <person name="Girard J.P."/>
        </authorList>
    </citation>
    <scope>TISSUE SPECIFICITY</scope>
</reference>
<proteinExistence type="evidence at transcript level"/>
<comment type="function">
    <text evidence="1">DNA-binding transcription regulator that regulates endothelial cell proliferation and G1/S cell-cycle progression. Specifically binds the 5'-[AT]NTNN[GT]GGCA[AGT]-3' core DNA sequence and acts by modulating expression of pRB-E2F cell-cycle target genes, including RRM1. Component of a THAP1/THAP3-HCFC1-OGT complex that is required for the regulation of the transcriptional activity of RRM1. May also have pro-apoptotic activity by potentiating both serum-withdrawal and TNF-induced apoptosis (By similarity).</text>
</comment>
<comment type="subunit">
    <text evidence="1">Interacts with PAWR. Component of a THAP1/THAP3-HCFC1-OGT complex that contains, either THAP1 or THAP3, HCFC1 and OGT. Interacts with OGT. Interacts (via the HBM) with HCFC1 (via the Kelch-repeat domain); the interaction recruits HCFC1 to the RRM1 promoter (By similarity).</text>
</comment>
<comment type="subcellular location">
    <subcellularLocation>
        <location evidence="1">Nucleus</location>
        <location evidence="1">Nucleoplasm</location>
    </subcellularLocation>
    <subcellularLocation>
        <location evidence="1">Nucleus</location>
        <location evidence="1">PML body</location>
    </subcellularLocation>
</comment>
<comment type="tissue specificity">
    <text evidence="4">Highest levels in heart, liver and kidney. Lower levels in brain and lung.</text>
</comment>
<comment type="similarity">
    <text evidence="5">Belongs to the THAP1 family.</text>
</comment>
<dbReference type="EMBL" id="BC038639">
    <property type="protein sequence ID" value="AAH38639.1"/>
    <property type="molecule type" value="mRNA"/>
</dbReference>
<dbReference type="CCDS" id="CCDS22208.1"/>
<dbReference type="RefSeq" id="NP_950243.1">
    <property type="nucleotide sequence ID" value="NM_199042.2"/>
</dbReference>
<dbReference type="SMR" id="Q8CHW1"/>
<dbReference type="FunCoup" id="Q8CHW1">
    <property type="interactions" value="4112"/>
</dbReference>
<dbReference type="STRING" id="10090.ENSMUSP00000042464"/>
<dbReference type="iPTMnet" id="Q8CHW1"/>
<dbReference type="PhosphoSitePlus" id="Q8CHW1"/>
<dbReference type="PaxDb" id="10090-ENSMUSP00000042464"/>
<dbReference type="PeptideAtlas" id="Q8CHW1"/>
<dbReference type="ProteomicsDB" id="262767"/>
<dbReference type="Antibodypedia" id="24159">
    <property type="antibodies" value="135 antibodies from 27 providers"/>
</dbReference>
<dbReference type="DNASU" id="73754"/>
<dbReference type="Ensembl" id="ENSMUST00000036807.13">
    <property type="protein sequence ID" value="ENSMUSP00000042464.6"/>
    <property type="gene ID" value="ENSMUSG00000037214.13"/>
</dbReference>
<dbReference type="GeneID" id="73754"/>
<dbReference type="KEGG" id="mmu:73754"/>
<dbReference type="UCSC" id="uc009lhq.2">
    <property type="organism name" value="mouse"/>
</dbReference>
<dbReference type="AGR" id="MGI:1921004"/>
<dbReference type="CTD" id="55145"/>
<dbReference type="MGI" id="MGI:1921004">
    <property type="gene designation" value="Thap1"/>
</dbReference>
<dbReference type="VEuPathDB" id="HostDB:ENSMUSG00000037214"/>
<dbReference type="eggNOG" id="KOG1721">
    <property type="taxonomic scope" value="Eukaryota"/>
</dbReference>
<dbReference type="GeneTree" id="ENSGT00940000159383"/>
<dbReference type="HOGENOM" id="CLU_076186_2_1_1"/>
<dbReference type="InParanoid" id="Q8CHW1"/>
<dbReference type="OMA" id="TKDCFKR"/>
<dbReference type="OrthoDB" id="9867479at2759"/>
<dbReference type="PhylomeDB" id="Q8CHW1"/>
<dbReference type="TreeFam" id="TF330127"/>
<dbReference type="BioGRID-ORCS" id="73754">
    <property type="hits" value="8 hits in 74 CRISPR screens"/>
</dbReference>
<dbReference type="ChiTaRS" id="Thap1">
    <property type="organism name" value="mouse"/>
</dbReference>
<dbReference type="PRO" id="PR:Q8CHW1"/>
<dbReference type="Proteomes" id="UP000000589">
    <property type="component" value="Chromosome 8"/>
</dbReference>
<dbReference type="RNAct" id="Q8CHW1">
    <property type="molecule type" value="protein"/>
</dbReference>
<dbReference type="Bgee" id="ENSMUSG00000037214">
    <property type="expression patterns" value="Expressed in cleaving embryo and 230 other cell types or tissues"/>
</dbReference>
<dbReference type="ExpressionAtlas" id="Q8CHW1">
    <property type="expression patterns" value="baseline and differential"/>
</dbReference>
<dbReference type="GO" id="GO:0001650">
    <property type="term" value="C:fibrillar center"/>
    <property type="evidence" value="ECO:0007669"/>
    <property type="project" value="Ensembl"/>
</dbReference>
<dbReference type="GO" id="GO:0005634">
    <property type="term" value="C:nucleus"/>
    <property type="evidence" value="ECO:0000250"/>
    <property type="project" value="UniProtKB"/>
</dbReference>
<dbReference type="GO" id="GO:0016605">
    <property type="term" value="C:PML body"/>
    <property type="evidence" value="ECO:0007669"/>
    <property type="project" value="UniProtKB-SubCell"/>
</dbReference>
<dbReference type="GO" id="GO:0001227">
    <property type="term" value="F:DNA-binding transcription repressor activity, RNA polymerase II-specific"/>
    <property type="evidence" value="ECO:0007669"/>
    <property type="project" value="Ensembl"/>
</dbReference>
<dbReference type="GO" id="GO:0042803">
    <property type="term" value="F:protein homodimerization activity"/>
    <property type="evidence" value="ECO:0000250"/>
    <property type="project" value="UniProtKB"/>
</dbReference>
<dbReference type="GO" id="GO:0000978">
    <property type="term" value="F:RNA polymerase II cis-regulatory region sequence-specific DNA binding"/>
    <property type="evidence" value="ECO:0007669"/>
    <property type="project" value="Ensembl"/>
</dbReference>
<dbReference type="GO" id="GO:0043565">
    <property type="term" value="F:sequence-specific DNA binding"/>
    <property type="evidence" value="ECO:0000250"/>
    <property type="project" value="UniProtKB"/>
</dbReference>
<dbReference type="GO" id="GO:0008270">
    <property type="term" value="F:zinc ion binding"/>
    <property type="evidence" value="ECO:0000250"/>
    <property type="project" value="UniProtKB"/>
</dbReference>
<dbReference type="GO" id="GO:0006351">
    <property type="term" value="P:DNA-templated transcription"/>
    <property type="evidence" value="ECO:0000250"/>
    <property type="project" value="UniProtKB"/>
</dbReference>
<dbReference type="GO" id="GO:0001935">
    <property type="term" value="P:endothelial cell proliferation"/>
    <property type="evidence" value="ECO:0000250"/>
    <property type="project" value="UniProtKB"/>
</dbReference>
<dbReference type="GO" id="GO:0006355">
    <property type="term" value="P:regulation of DNA-templated transcription"/>
    <property type="evidence" value="ECO:0000250"/>
    <property type="project" value="UniProtKB"/>
</dbReference>
<dbReference type="GO" id="GO:0007346">
    <property type="term" value="P:regulation of mitotic cell cycle"/>
    <property type="evidence" value="ECO:0000250"/>
    <property type="project" value="UniProtKB"/>
</dbReference>
<dbReference type="Gene3D" id="6.20.210.20">
    <property type="entry name" value="THAP domain"/>
    <property type="match status" value="1"/>
</dbReference>
<dbReference type="InterPro" id="IPR026516">
    <property type="entry name" value="THAP1/10"/>
</dbReference>
<dbReference type="InterPro" id="IPR006612">
    <property type="entry name" value="THAP_Znf"/>
</dbReference>
<dbReference type="InterPro" id="IPR038441">
    <property type="entry name" value="THAP_Znf_sf"/>
</dbReference>
<dbReference type="PANTHER" id="PTHR46600">
    <property type="entry name" value="THAP DOMAIN-CONTAINING"/>
    <property type="match status" value="1"/>
</dbReference>
<dbReference type="PANTHER" id="PTHR46600:SF1">
    <property type="entry name" value="THAP DOMAIN-CONTAINING PROTEIN 1"/>
    <property type="match status" value="1"/>
</dbReference>
<dbReference type="Pfam" id="PF05485">
    <property type="entry name" value="THAP"/>
    <property type="match status" value="1"/>
</dbReference>
<dbReference type="SMART" id="SM00692">
    <property type="entry name" value="DM3"/>
    <property type="match status" value="1"/>
</dbReference>
<dbReference type="SMART" id="SM00980">
    <property type="entry name" value="THAP"/>
    <property type="match status" value="1"/>
</dbReference>
<dbReference type="SUPFAM" id="SSF57716">
    <property type="entry name" value="Glucocorticoid receptor-like (DNA-binding domain)"/>
    <property type="match status" value="1"/>
</dbReference>
<dbReference type="PROSITE" id="PS50950">
    <property type="entry name" value="ZF_THAP"/>
    <property type="match status" value="1"/>
</dbReference>
<feature type="chain" id="PRO_0000068639" description="THAP domain-containing protein 1">
    <location>
        <begin position="1"/>
        <end position="210"/>
    </location>
</feature>
<feature type="zinc finger region" description="THAP-type" evidence="3">
    <location>
        <begin position="5"/>
        <end position="57"/>
    </location>
</feature>
<feature type="coiled-coil region" evidence="2">
    <location>
        <begin position="137"/>
        <end position="187"/>
    </location>
</feature>
<feature type="short sequence motif" description="HCFC1-binding motif (HBM)" evidence="1">
    <location>
        <begin position="131"/>
        <end position="134"/>
    </location>
</feature>
<protein>
    <recommendedName>
        <fullName>THAP domain-containing protein 1</fullName>
    </recommendedName>
</protein>
<organism>
    <name type="scientific">Mus musculus</name>
    <name type="common">Mouse</name>
    <dbReference type="NCBI Taxonomy" id="10090"/>
    <lineage>
        <taxon>Eukaryota</taxon>
        <taxon>Metazoa</taxon>
        <taxon>Chordata</taxon>
        <taxon>Craniata</taxon>
        <taxon>Vertebrata</taxon>
        <taxon>Euteleostomi</taxon>
        <taxon>Mammalia</taxon>
        <taxon>Eutheria</taxon>
        <taxon>Euarchontoglires</taxon>
        <taxon>Glires</taxon>
        <taxon>Rodentia</taxon>
        <taxon>Myomorpha</taxon>
        <taxon>Muroidea</taxon>
        <taxon>Muridae</taxon>
        <taxon>Murinae</taxon>
        <taxon>Mus</taxon>
        <taxon>Mus</taxon>
    </lineage>
</organism>
<evidence type="ECO:0000250" key="1"/>
<evidence type="ECO:0000255" key="2"/>
<evidence type="ECO:0000255" key="3">
    <source>
        <dbReference type="PROSITE-ProRule" id="PRU00309"/>
    </source>
</evidence>
<evidence type="ECO:0000269" key="4">
    <source>
    </source>
</evidence>
<evidence type="ECO:0000305" key="5"/>
<gene>
    <name type="primary">Thap1</name>
</gene>
<name>THAP1_MOUSE</name>